<evidence type="ECO:0000250" key="1"/>
<evidence type="ECO:0000255" key="2">
    <source>
        <dbReference type="HAMAP-Rule" id="MF_01303"/>
    </source>
</evidence>
<dbReference type="EC" id="1.97.1.12" evidence="2"/>
<dbReference type="EMBL" id="AY916449">
    <property type="protein sequence ID" value="AAW82547.1"/>
    <property type="molecule type" value="Genomic_DNA"/>
</dbReference>
<dbReference type="RefSeq" id="YP_358641.1">
    <property type="nucleotide sequence ID" value="NC_007499.1"/>
</dbReference>
<dbReference type="SMR" id="Q3BAH7"/>
<dbReference type="GeneID" id="3741740"/>
<dbReference type="GO" id="GO:0009535">
    <property type="term" value="C:chloroplast thylakoid membrane"/>
    <property type="evidence" value="ECO:0007669"/>
    <property type="project" value="UniProtKB-SubCell"/>
</dbReference>
<dbReference type="GO" id="GO:0009522">
    <property type="term" value="C:photosystem I"/>
    <property type="evidence" value="ECO:0007669"/>
    <property type="project" value="UniProtKB-KW"/>
</dbReference>
<dbReference type="GO" id="GO:0051539">
    <property type="term" value="F:4 iron, 4 sulfur cluster binding"/>
    <property type="evidence" value="ECO:0007669"/>
    <property type="project" value="UniProtKB-KW"/>
</dbReference>
<dbReference type="GO" id="GO:0009055">
    <property type="term" value="F:electron transfer activity"/>
    <property type="evidence" value="ECO:0007669"/>
    <property type="project" value="UniProtKB-UniRule"/>
</dbReference>
<dbReference type="GO" id="GO:0046872">
    <property type="term" value="F:metal ion binding"/>
    <property type="evidence" value="ECO:0007669"/>
    <property type="project" value="UniProtKB-KW"/>
</dbReference>
<dbReference type="GO" id="GO:0016491">
    <property type="term" value="F:oxidoreductase activity"/>
    <property type="evidence" value="ECO:0007669"/>
    <property type="project" value="UniProtKB-KW"/>
</dbReference>
<dbReference type="GO" id="GO:0009773">
    <property type="term" value="P:photosynthetic electron transport in photosystem I"/>
    <property type="evidence" value="ECO:0007669"/>
    <property type="project" value="InterPro"/>
</dbReference>
<dbReference type="FunFam" id="3.30.70.20:FF:000001">
    <property type="entry name" value="Photosystem I iron-sulfur center"/>
    <property type="match status" value="1"/>
</dbReference>
<dbReference type="Gene3D" id="3.30.70.20">
    <property type="match status" value="1"/>
</dbReference>
<dbReference type="HAMAP" id="MF_01303">
    <property type="entry name" value="PSI_PsaC"/>
    <property type="match status" value="1"/>
</dbReference>
<dbReference type="InterPro" id="IPR017896">
    <property type="entry name" value="4Fe4S_Fe-S-bd"/>
</dbReference>
<dbReference type="InterPro" id="IPR017900">
    <property type="entry name" value="4Fe4S_Fe_S_CS"/>
</dbReference>
<dbReference type="InterPro" id="IPR050157">
    <property type="entry name" value="PSI_iron-sulfur_center"/>
</dbReference>
<dbReference type="InterPro" id="IPR017491">
    <property type="entry name" value="PSI_PsaC"/>
</dbReference>
<dbReference type="NCBIfam" id="TIGR03048">
    <property type="entry name" value="PS_I_psaC"/>
    <property type="match status" value="1"/>
</dbReference>
<dbReference type="PANTHER" id="PTHR24960:SF79">
    <property type="entry name" value="PHOTOSYSTEM I IRON-SULFUR CENTER"/>
    <property type="match status" value="1"/>
</dbReference>
<dbReference type="PANTHER" id="PTHR24960">
    <property type="entry name" value="PHOTOSYSTEM I IRON-SULFUR CENTER-RELATED"/>
    <property type="match status" value="1"/>
</dbReference>
<dbReference type="Pfam" id="PF14697">
    <property type="entry name" value="Fer4_21"/>
    <property type="match status" value="1"/>
</dbReference>
<dbReference type="SUPFAM" id="SSF54862">
    <property type="entry name" value="4Fe-4S ferredoxins"/>
    <property type="match status" value="1"/>
</dbReference>
<dbReference type="PROSITE" id="PS00198">
    <property type="entry name" value="4FE4S_FER_1"/>
    <property type="match status" value="2"/>
</dbReference>
<dbReference type="PROSITE" id="PS51379">
    <property type="entry name" value="4FE4S_FER_2"/>
    <property type="match status" value="2"/>
</dbReference>
<accession>Q3BAH7</accession>
<comment type="function">
    <text evidence="2">Apoprotein for the two 4Fe-4S centers FA and FB of photosystem I (PSI); essential for photochemical activity. FB is the terminal electron acceptor of PSI, donating electrons to ferredoxin. The C-terminus interacts with PsaA/B/D and helps assemble the protein into the PSI complex. Required for binding of PsaD and PsaE to PSI. PSI is a plastocyanin-ferredoxin oxidoreductase, converting photonic excitation into a charge separation, which transfers an electron from the donor P700 chlorophyll pair to the spectroscopically characterized acceptors A0, A1, FX, FA and FB in turn.</text>
</comment>
<comment type="catalytic activity">
    <reaction evidence="2">
        <text>reduced [plastocyanin] + hnu + oxidized [2Fe-2S]-[ferredoxin] = oxidized [plastocyanin] + reduced [2Fe-2S]-[ferredoxin]</text>
        <dbReference type="Rhea" id="RHEA:30407"/>
        <dbReference type="Rhea" id="RHEA-COMP:10000"/>
        <dbReference type="Rhea" id="RHEA-COMP:10001"/>
        <dbReference type="Rhea" id="RHEA-COMP:10039"/>
        <dbReference type="Rhea" id="RHEA-COMP:10040"/>
        <dbReference type="ChEBI" id="CHEBI:29036"/>
        <dbReference type="ChEBI" id="CHEBI:30212"/>
        <dbReference type="ChEBI" id="CHEBI:33737"/>
        <dbReference type="ChEBI" id="CHEBI:33738"/>
        <dbReference type="ChEBI" id="CHEBI:49552"/>
        <dbReference type="EC" id="1.97.1.12"/>
    </reaction>
</comment>
<comment type="cofactor">
    <cofactor evidence="2">
        <name>[4Fe-4S] cluster</name>
        <dbReference type="ChEBI" id="CHEBI:49883"/>
    </cofactor>
    <text evidence="2">Binds 2 [4Fe-4S] clusters. Cluster 2 is most probably the spectroscopically characterized electron acceptor FA and cluster 1 is most probably FB.</text>
</comment>
<comment type="subunit">
    <text evidence="2">The eukaryotic PSI reaction center is composed of at least 11 subunits.</text>
</comment>
<comment type="subcellular location">
    <subcellularLocation>
        <location evidence="2">Plastid</location>
        <location evidence="2">Chloroplast thylakoid membrane</location>
        <topology evidence="2">Peripheral membrane protein</topology>
        <orientation evidence="2">Stromal side</orientation>
    </subcellularLocation>
</comment>
<organism>
    <name type="scientific">Phalaenopsis aphrodite subsp. formosana</name>
    <name type="common">Moth orchid</name>
    <dbReference type="NCBI Taxonomy" id="308872"/>
    <lineage>
        <taxon>Eukaryota</taxon>
        <taxon>Viridiplantae</taxon>
        <taxon>Streptophyta</taxon>
        <taxon>Embryophyta</taxon>
        <taxon>Tracheophyta</taxon>
        <taxon>Spermatophyta</taxon>
        <taxon>Magnoliopsida</taxon>
        <taxon>Liliopsida</taxon>
        <taxon>Asparagales</taxon>
        <taxon>Orchidaceae</taxon>
        <taxon>Epidendroideae</taxon>
        <taxon>Vandeae</taxon>
        <taxon>Aeridinae</taxon>
        <taxon>Phalaenopsis</taxon>
    </lineage>
</organism>
<protein>
    <recommendedName>
        <fullName evidence="2">Photosystem I iron-sulfur center</fullName>
        <ecNumber evidence="2">1.97.1.12</ecNumber>
    </recommendedName>
    <alternativeName>
        <fullName evidence="2">9 kDa polypeptide</fullName>
    </alternativeName>
    <alternativeName>
        <fullName evidence="2">PSI-C</fullName>
    </alternativeName>
    <alternativeName>
        <fullName evidence="2">Photosystem I subunit VII</fullName>
    </alternativeName>
    <alternativeName>
        <fullName evidence="2">PsaC</fullName>
    </alternativeName>
</protein>
<gene>
    <name evidence="2" type="primary">psaC</name>
</gene>
<reference key="1">
    <citation type="journal article" date="2006" name="Mol. Biol. Evol.">
        <title>The chloroplast genome of Phalaenopsis aphrodite (Orchidaceae): comparative analysis of evolutionary rate with that of grasses and its phylogenetic implications.</title>
        <authorList>
            <person name="Chang C.-C."/>
            <person name="Lin H.-C."/>
            <person name="Lin I.-P."/>
            <person name="Chow T.-Y."/>
            <person name="Chen H.-H."/>
            <person name="Chen W.-H."/>
            <person name="Cheng C.-H."/>
            <person name="Lin C.-Y."/>
            <person name="Liu S.-M."/>
            <person name="Chang C.-C."/>
            <person name="Chaw S.-M."/>
        </authorList>
    </citation>
    <scope>NUCLEOTIDE SEQUENCE [LARGE SCALE GENOMIC DNA]</scope>
    <source>
        <strain>cv. Taisugar TS-97</strain>
    </source>
</reference>
<feature type="initiator methionine" description="Removed" evidence="1">
    <location>
        <position position="1"/>
    </location>
</feature>
<feature type="chain" id="PRO_0000275994" description="Photosystem I iron-sulfur center">
    <location>
        <begin position="2"/>
        <end position="81"/>
    </location>
</feature>
<feature type="domain" description="4Fe-4S ferredoxin-type 1" evidence="2">
    <location>
        <begin position="2"/>
        <end position="31"/>
    </location>
</feature>
<feature type="domain" description="4Fe-4S ferredoxin-type 2" evidence="2">
    <location>
        <begin position="39"/>
        <end position="68"/>
    </location>
</feature>
<feature type="binding site" evidence="2">
    <location>
        <position position="11"/>
    </location>
    <ligand>
        <name>[4Fe-4S] cluster</name>
        <dbReference type="ChEBI" id="CHEBI:49883"/>
        <label>1</label>
    </ligand>
</feature>
<feature type="binding site" evidence="2">
    <location>
        <position position="14"/>
    </location>
    <ligand>
        <name>[4Fe-4S] cluster</name>
        <dbReference type="ChEBI" id="CHEBI:49883"/>
        <label>1</label>
    </ligand>
</feature>
<feature type="binding site" evidence="2">
    <location>
        <position position="17"/>
    </location>
    <ligand>
        <name>[4Fe-4S] cluster</name>
        <dbReference type="ChEBI" id="CHEBI:49883"/>
        <label>1</label>
    </ligand>
</feature>
<feature type="binding site" evidence="2">
    <location>
        <position position="21"/>
    </location>
    <ligand>
        <name>[4Fe-4S] cluster</name>
        <dbReference type="ChEBI" id="CHEBI:49883"/>
        <label>2</label>
    </ligand>
</feature>
<feature type="binding site" evidence="2">
    <location>
        <position position="48"/>
    </location>
    <ligand>
        <name>[4Fe-4S] cluster</name>
        <dbReference type="ChEBI" id="CHEBI:49883"/>
        <label>2</label>
    </ligand>
</feature>
<feature type="binding site" evidence="2">
    <location>
        <position position="51"/>
    </location>
    <ligand>
        <name>[4Fe-4S] cluster</name>
        <dbReference type="ChEBI" id="CHEBI:49883"/>
        <label>2</label>
    </ligand>
</feature>
<feature type="binding site" evidence="2">
    <location>
        <position position="54"/>
    </location>
    <ligand>
        <name>[4Fe-4S] cluster</name>
        <dbReference type="ChEBI" id="CHEBI:49883"/>
        <label>2</label>
    </ligand>
</feature>
<feature type="binding site" evidence="2">
    <location>
        <position position="58"/>
    </location>
    <ligand>
        <name>[4Fe-4S] cluster</name>
        <dbReference type="ChEBI" id="CHEBI:49883"/>
        <label>1</label>
    </ligand>
</feature>
<geneLocation type="chloroplast"/>
<proteinExistence type="inferred from homology"/>
<name>PSAC_PHAAO</name>
<sequence>MSHSVKIYDTCIGCTQCVRACPTDVLEMIPWDGCKAKQIASAPRTEDCVGCKRCESACPTDFLSVRVYLWHETTRSMGLSY</sequence>
<keyword id="KW-0004">4Fe-4S</keyword>
<keyword id="KW-0150">Chloroplast</keyword>
<keyword id="KW-0249">Electron transport</keyword>
<keyword id="KW-0408">Iron</keyword>
<keyword id="KW-0411">Iron-sulfur</keyword>
<keyword id="KW-0472">Membrane</keyword>
<keyword id="KW-0479">Metal-binding</keyword>
<keyword id="KW-0560">Oxidoreductase</keyword>
<keyword id="KW-0602">Photosynthesis</keyword>
<keyword id="KW-0603">Photosystem I</keyword>
<keyword id="KW-0934">Plastid</keyword>
<keyword id="KW-0677">Repeat</keyword>
<keyword id="KW-0793">Thylakoid</keyword>
<keyword id="KW-0813">Transport</keyword>